<reference key="1">
    <citation type="journal article" date="2000" name="Nature">
        <title>Sequence and analysis of chromosome 5 of the plant Arabidopsis thaliana.</title>
        <authorList>
            <person name="Tabata S."/>
            <person name="Kaneko T."/>
            <person name="Nakamura Y."/>
            <person name="Kotani H."/>
            <person name="Kato T."/>
            <person name="Asamizu E."/>
            <person name="Miyajima N."/>
            <person name="Sasamoto S."/>
            <person name="Kimura T."/>
            <person name="Hosouchi T."/>
            <person name="Kawashima K."/>
            <person name="Kohara M."/>
            <person name="Matsumoto M."/>
            <person name="Matsuno A."/>
            <person name="Muraki A."/>
            <person name="Nakayama S."/>
            <person name="Nakazaki N."/>
            <person name="Naruo K."/>
            <person name="Okumura S."/>
            <person name="Shinpo S."/>
            <person name="Takeuchi C."/>
            <person name="Wada T."/>
            <person name="Watanabe A."/>
            <person name="Yamada M."/>
            <person name="Yasuda M."/>
            <person name="Sato S."/>
            <person name="de la Bastide M."/>
            <person name="Huang E."/>
            <person name="Spiegel L."/>
            <person name="Gnoj L."/>
            <person name="O'Shaughnessy A."/>
            <person name="Preston R."/>
            <person name="Habermann K."/>
            <person name="Murray J."/>
            <person name="Johnson D."/>
            <person name="Rohlfing T."/>
            <person name="Nelson J."/>
            <person name="Stoneking T."/>
            <person name="Pepin K."/>
            <person name="Spieth J."/>
            <person name="Sekhon M."/>
            <person name="Armstrong J."/>
            <person name="Becker M."/>
            <person name="Belter E."/>
            <person name="Cordum H."/>
            <person name="Cordes M."/>
            <person name="Courtney L."/>
            <person name="Courtney W."/>
            <person name="Dante M."/>
            <person name="Du H."/>
            <person name="Edwards J."/>
            <person name="Fryman J."/>
            <person name="Haakensen B."/>
            <person name="Lamar E."/>
            <person name="Latreille P."/>
            <person name="Leonard S."/>
            <person name="Meyer R."/>
            <person name="Mulvaney E."/>
            <person name="Ozersky P."/>
            <person name="Riley A."/>
            <person name="Strowmatt C."/>
            <person name="Wagner-McPherson C."/>
            <person name="Wollam A."/>
            <person name="Yoakum M."/>
            <person name="Bell M."/>
            <person name="Dedhia N."/>
            <person name="Parnell L."/>
            <person name="Shah R."/>
            <person name="Rodriguez M."/>
            <person name="Hoon See L."/>
            <person name="Vil D."/>
            <person name="Baker J."/>
            <person name="Kirchoff K."/>
            <person name="Toth K."/>
            <person name="King L."/>
            <person name="Bahret A."/>
            <person name="Miller B."/>
            <person name="Marra M.A."/>
            <person name="Martienssen R."/>
            <person name="McCombie W.R."/>
            <person name="Wilson R.K."/>
            <person name="Murphy G."/>
            <person name="Bancroft I."/>
            <person name="Volckaert G."/>
            <person name="Wambutt R."/>
            <person name="Duesterhoeft A."/>
            <person name="Stiekema W."/>
            <person name="Pohl T."/>
            <person name="Entian K.-D."/>
            <person name="Terryn N."/>
            <person name="Hartley N."/>
            <person name="Bent E."/>
            <person name="Johnson S."/>
            <person name="Langham S.-A."/>
            <person name="McCullagh B."/>
            <person name="Robben J."/>
            <person name="Grymonprez B."/>
            <person name="Zimmermann W."/>
            <person name="Ramsperger U."/>
            <person name="Wedler H."/>
            <person name="Balke K."/>
            <person name="Wedler E."/>
            <person name="Peters S."/>
            <person name="van Staveren M."/>
            <person name="Dirkse W."/>
            <person name="Mooijman P."/>
            <person name="Klein Lankhorst R."/>
            <person name="Weitzenegger T."/>
            <person name="Bothe G."/>
            <person name="Rose M."/>
            <person name="Hauf J."/>
            <person name="Berneiser S."/>
            <person name="Hempel S."/>
            <person name="Feldpausch M."/>
            <person name="Lamberth S."/>
            <person name="Villarroel R."/>
            <person name="Gielen J."/>
            <person name="Ardiles W."/>
            <person name="Bents O."/>
            <person name="Lemcke K."/>
            <person name="Kolesov G."/>
            <person name="Mayer K.F.X."/>
            <person name="Rudd S."/>
            <person name="Schoof H."/>
            <person name="Schueller C."/>
            <person name="Zaccaria P."/>
            <person name="Mewes H.-W."/>
            <person name="Bevan M."/>
            <person name="Fransz P.F."/>
        </authorList>
    </citation>
    <scope>NUCLEOTIDE SEQUENCE [LARGE SCALE GENOMIC DNA]</scope>
    <source>
        <strain>cv. Columbia</strain>
    </source>
</reference>
<reference key="2">
    <citation type="journal article" date="2017" name="Plant J.">
        <title>Araport11: a complete reannotation of the Arabidopsis thaliana reference genome.</title>
        <authorList>
            <person name="Cheng C.Y."/>
            <person name="Krishnakumar V."/>
            <person name="Chan A.P."/>
            <person name="Thibaud-Nissen F."/>
            <person name="Schobel S."/>
            <person name="Town C.D."/>
        </authorList>
    </citation>
    <scope>GENOME REANNOTATION</scope>
    <source>
        <strain>cv. Columbia</strain>
    </source>
</reference>
<reference key="3">
    <citation type="journal article" date="2003" name="Science">
        <title>Empirical analysis of transcriptional activity in the Arabidopsis genome.</title>
        <authorList>
            <person name="Yamada K."/>
            <person name="Lim J."/>
            <person name="Dale J.M."/>
            <person name="Chen H."/>
            <person name="Shinn P."/>
            <person name="Palm C.J."/>
            <person name="Southwick A.M."/>
            <person name="Wu H.C."/>
            <person name="Kim C.J."/>
            <person name="Nguyen M."/>
            <person name="Pham P.K."/>
            <person name="Cheuk R.F."/>
            <person name="Karlin-Newmann G."/>
            <person name="Liu S.X."/>
            <person name="Lam B."/>
            <person name="Sakano H."/>
            <person name="Wu T."/>
            <person name="Yu G."/>
            <person name="Miranda M."/>
            <person name="Quach H.L."/>
            <person name="Tripp M."/>
            <person name="Chang C.H."/>
            <person name="Lee J.M."/>
            <person name="Toriumi M.J."/>
            <person name="Chan M.M."/>
            <person name="Tang C.C."/>
            <person name="Onodera C.S."/>
            <person name="Deng J.M."/>
            <person name="Akiyama K."/>
            <person name="Ansari Y."/>
            <person name="Arakawa T."/>
            <person name="Banh J."/>
            <person name="Banno F."/>
            <person name="Bowser L."/>
            <person name="Brooks S.Y."/>
            <person name="Carninci P."/>
            <person name="Chao Q."/>
            <person name="Choy N."/>
            <person name="Enju A."/>
            <person name="Goldsmith A.D."/>
            <person name="Gurjal M."/>
            <person name="Hansen N.F."/>
            <person name="Hayashizaki Y."/>
            <person name="Johnson-Hopson C."/>
            <person name="Hsuan V.W."/>
            <person name="Iida K."/>
            <person name="Karnes M."/>
            <person name="Khan S."/>
            <person name="Koesema E."/>
            <person name="Ishida J."/>
            <person name="Jiang P.X."/>
            <person name="Jones T."/>
            <person name="Kawai J."/>
            <person name="Kamiya A."/>
            <person name="Meyers C."/>
            <person name="Nakajima M."/>
            <person name="Narusaka M."/>
            <person name="Seki M."/>
            <person name="Sakurai T."/>
            <person name="Satou M."/>
            <person name="Tamse R."/>
            <person name="Vaysberg M."/>
            <person name="Wallender E.K."/>
            <person name="Wong C."/>
            <person name="Yamamura Y."/>
            <person name="Yuan S."/>
            <person name="Shinozaki K."/>
            <person name="Davis R.W."/>
            <person name="Theologis A."/>
            <person name="Ecker J.R."/>
        </authorList>
    </citation>
    <scope>NUCLEOTIDE SEQUENCE [LARGE SCALE MRNA] OF 731-968 AND 796-968</scope>
    <source>
        <strain>cv. Columbia</strain>
    </source>
</reference>
<reference key="4">
    <citation type="journal article" date="2006" name="Plant J.">
        <title>An Arabidopsis chloroplast-targeted Hsp101 homologue, APG6, has an essential role in chloroplast development as well as heat-stress response.</title>
        <authorList>
            <person name="Myouga F."/>
            <person name="Motohashi R."/>
            <person name="Kuromori T."/>
            <person name="Nagata N."/>
            <person name="Shinozaki K."/>
        </authorList>
    </citation>
    <scope>FUNCTION</scope>
    <scope>SUBCELLULAR LOCATION</scope>
    <scope>INDUCTION BY HEAT STRESS</scope>
    <scope>DISRUPTION PHENOTYPE</scope>
</reference>
<reference key="5">
    <citation type="journal article" date="2007" name="Mol. Cell. Proteomics">
        <title>Multidimensional protein identification technology (MudPIT) analysis of ubiquitinated proteins in plants.</title>
        <authorList>
            <person name="Maor R."/>
            <person name="Jones A."/>
            <person name="Nuehse T.S."/>
            <person name="Studholme D.J."/>
            <person name="Peck S.C."/>
            <person name="Shirasu K."/>
        </authorList>
    </citation>
    <scope>IDENTIFICATION BY MASS SPECTROMETRY [LARGE SCALE ANALYSIS]</scope>
    <source>
        <strain>cv. Landsberg erecta</strain>
    </source>
</reference>
<reference key="6">
    <citation type="journal article" date="2007" name="Plant J.">
        <title>The Arabidopsis ClpB/Hsp100 family of proteins: chaperones for stress and chloroplast development.</title>
        <authorList>
            <person name="Lee U."/>
            <person name="Rioflorido I."/>
            <person name="Hong S.W."/>
            <person name="Larkindale J."/>
            <person name="Waters E.R."/>
            <person name="Vierling E."/>
        </authorList>
    </citation>
    <scope>FUNCTION</scope>
    <scope>SUBCELLULAR LOCATION</scope>
    <scope>INDUCTION BY HEAT STRESS</scope>
    <scope>DISRUPTION PHENOTYPE</scope>
</reference>
<organism>
    <name type="scientific">Arabidopsis thaliana</name>
    <name type="common">Mouse-ear cress</name>
    <dbReference type="NCBI Taxonomy" id="3702"/>
    <lineage>
        <taxon>Eukaryota</taxon>
        <taxon>Viridiplantae</taxon>
        <taxon>Streptophyta</taxon>
        <taxon>Embryophyta</taxon>
        <taxon>Tracheophyta</taxon>
        <taxon>Spermatophyta</taxon>
        <taxon>Magnoliopsida</taxon>
        <taxon>eudicotyledons</taxon>
        <taxon>Gunneridae</taxon>
        <taxon>Pentapetalae</taxon>
        <taxon>rosids</taxon>
        <taxon>malvids</taxon>
        <taxon>Brassicales</taxon>
        <taxon>Brassicaceae</taxon>
        <taxon>Camelineae</taxon>
        <taxon>Arabidopsis</taxon>
    </lineage>
</organism>
<accession>Q9LF37</accession>
<accession>Q8GRN9</accession>
<sequence length="968" mass="108943">MATATTTATAAFSGVVSVGTETRRIYSFSHLQPSAAFPAKPSSFKSLKLKQSARLTRRLDHRPFVVRCEASSSNGRLTQQEFTEMAWQSIVSSPDVAKENKQQIVETEHLMKALLEQKNGLARRIFSKIGVDNTKVLEATEKFIQRQPKVYGDAAGSMLGRDLEALFQRARQFKKDLKDSYVSVEHLVLAFADDKRFGKQLFKDFQISERSLKSAIESIRGKQSVIDQDPEGKYEALEKYGKDLTAMAREGKLDPVIGRDDEIRRCIQILSRRTKNNPVLIGEPGVGKTAISEGLAQRIVQGDVPQALMNRKLISLDMGALIAGAKYRGEFEDRLKAVLKEVTDSEGQIILFIDEIHTVVGAGATNGAMDAGNLLKPMLGRGELRCIGATTLDEYRKYIEKDPALERRFQQVYVDQPTVEDTISILRGLRERYELHHGVRISDSALVEAAILSDRYISGRFLPDKAIDLVDEAAAKLKMEITSKPTALDELDRSVIKLEMERLSLTNDTDKASRERLNRIETELVLLKEKQAELTEQWEHERSVMSRLQSIKEEIDRVNLEIQQAEREYDLNRAAELKYGSLNSLQRQLNEAEKELNEYLSSGKSMFREEVLGSDIAEIVSKWTGIPVSKLQQSERDKLLHLEEELHKRVVGQNPAVTAVAEAIQRSRAGLSDPGRPIASFMFMGPTGVGKTELAKALASYMFNTEEALVRIDMSEYMEKHAVSRLIGAPPGYVGYEEGGQLTETVRRRPYSVILFDEIEKAHGDVFNVFLQILDDGRVTDSQGRTVSFTNTVIIMTSNVGSQFILNNTDDDANELSYETIKERVMNAARSIFRPEFMNRVDEYIVFKPLDREQINRIVRLQLARVQKRIADRKMKINITDAAVDLLGSLGYDPNYGARPVKRVIQQNIENELAKGILRGDFKEEDGILIDTEVTAFSNGQLPQQKLTFKKIESETADAEQEEAAFSK</sequence>
<proteinExistence type="evidence at protein level"/>
<gene>
    <name type="primary">CLPB3</name>
    <name type="synonym">APG6</name>
    <name type="synonym">CLPB-P</name>
    <name type="ordered locus">At5g15450</name>
    <name type="ORF">T20K14.60</name>
</gene>
<dbReference type="EMBL" id="AL391143">
    <property type="protein sequence ID" value="CAC01744.1"/>
    <property type="molecule type" value="Genomic_DNA"/>
</dbReference>
<dbReference type="EMBL" id="CP002688">
    <property type="protein sequence ID" value="AED92162.1"/>
    <property type="molecule type" value="Genomic_DNA"/>
</dbReference>
<dbReference type="EMBL" id="BT000447">
    <property type="protein sequence ID" value="AAN17424.1"/>
    <property type="status" value="ALT_INIT"/>
    <property type="molecule type" value="mRNA"/>
</dbReference>
<dbReference type="EMBL" id="BT002569">
    <property type="protein sequence ID" value="AAO00929.1"/>
    <property type="molecule type" value="mRNA"/>
</dbReference>
<dbReference type="PIR" id="T51523">
    <property type="entry name" value="T51523"/>
</dbReference>
<dbReference type="RefSeq" id="NP_568314.1">
    <property type="nucleotide sequence ID" value="NM_121549.3"/>
</dbReference>
<dbReference type="SMR" id="Q9LF37"/>
<dbReference type="BioGRID" id="16674">
    <property type="interactions" value="6"/>
</dbReference>
<dbReference type="FunCoup" id="Q9LF37">
    <property type="interactions" value="615"/>
</dbReference>
<dbReference type="IntAct" id="Q9LF37">
    <property type="interactions" value="1"/>
</dbReference>
<dbReference type="STRING" id="3702.Q9LF37"/>
<dbReference type="PaxDb" id="3702-AT5G15450.1"/>
<dbReference type="ProteomicsDB" id="246772"/>
<dbReference type="EnsemblPlants" id="AT5G15450.1">
    <property type="protein sequence ID" value="AT5G15450.1"/>
    <property type="gene ID" value="AT5G15450"/>
</dbReference>
<dbReference type="GeneID" id="831398"/>
<dbReference type="Gramene" id="AT5G15450.1">
    <property type="protein sequence ID" value="AT5G15450.1"/>
    <property type="gene ID" value="AT5G15450"/>
</dbReference>
<dbReference type="KEGG" id="ath:AT5G15450"/>
<dbReference type="Araport" id="AT5G15450"/>
<dbReference type="TAIR" id="AT5G15450">
    <property type="gene designation" value="CLPB3"/>
</dbReference>
<dbReference type="eggNOG" id="KOG1051">
    <property type="taxonomic scope" value="Eukaryota"/>
</dbReference>
<dbReference type="HOGENOM" id="CLU_005070_4_2_1"/>
<dbReference type="InParanoid" id="Q9LF37"/>
<dbReference type="OMA" id="VSKMMQG"/>
<dbReference type="PhylomeDB" id="Q9LF37"/>
<dbReference type="PRO" id="PR:Q9LF37"/>
<dbReference type="Proteomes" id="UP000006548">
    <property type="component" value="Chromosome 5"/>
</dbReference>
<dbReference type="ExpressionAtlas" id="Q9LF37">
    <property type="expression patterns" value="baseline and differential"/>
</dbReference>
<dbReference type="GO" id="GO:0009507">
    <property type="term" value="C:chloroplast"/>
    <property type="evidence" value="ECO:0000314"/>
    <property type="project" value="TAIR"/>
</dbReference>
<dbReference type="GO" id="GO:0009570">
    <property type="term" value="C:chloroplast stroma"/>
    <property type="evidence" value="ECO:0007005"/>
    <property type="project" value="TAIR"/>
</dbReference>
<dbReference type="GO" id="GO:0009536">
    <property type="term" value="C:plastid"/>
    <property type="evidence" value="ECO:0007005"/>
    <property type="project" value="TAIR"/>
</dbReference>
<dbReference type="GO" id="GO:0009532">
    <property type="term" value="C:plastid stroma"/>
    <property type="evidence" value="ECO:0000314"/>
    <property type="project" value="TAIR"/>
</dbReference>
<dbReference type="GO" id="GO:0005524">
    <property type="term" value="F:ATP binding"/>
    <property type="evidence" value="ECO:0007669"/>
    <property type="project" value="UniProtKB-KW"/>
</dbReference>
<dbReference type="GO" id="GO:0016887">
    <property type="term" value="F:ATP hydrolysis activity"/>
    <property type="evidence" value="ECO:0007669"/>
    <property type="project" value="InterPro"/>
</dbReference>
<dbReference type="GO" id="GO:0009658">
    <property type="term" value="P:chloroplast organization"/>
    <property type="evidence" value="ECO:0000315"/>
    <property type="project" value="TAIR"/>
</dbReference>
<dbReference type="GO" id="GO:0042026">
    <property type="term" value="P:protein refolding"/>
    <property type="evidence" value="ECO:0007669"/>
    <property type="project" value="InterPro"/>
</dbReference>
<dbReference type="GO" id="GO:0009408">
    <property type="term" value="P:response to heat"/>
    <property type="evidence" value="ECO:0000270"/>
    <property type="project" value="TAIR"/>
</dbReference>
<dbReference type="CDD" id="cd00009">
    <property type="entry name" value="AAA"/>
    <property type="match status" value="1"/>
</dbReference>
<dbReference type="CDD" id="cd19499">
    <property type="entry name" value="RecA-like_ClpB_Hsp104-like"/>
    <property type="match status" value="1"/>
</dbReference>
<dbReference type="FunFam" id="1.10.8.60:FF:000017">
    <property type="entry name" value="ATP-dependent chaperone ClpB"/>
    <property type="match status" value="1"/>
</dbReference>
<dbReference type="FunFam" id="3.40.50.300:FF:000120">
    <property type="entry name" value="ATP-dependent chaperone ClpB"/>
    <property type="match status" value="1"/>
</dbReference>
<dbReference type="FunFam" id="3.40.50.300:FF:000025">
    <property type="entry name" value="ATP-dependent Clp protease subunit"/>
    <property type="match status" value="1"/>
</dbReference>
<dbReference type="FunFam" id="3.40.50.300:FF:000010">
    <property type="entry name" value="Chaperone clpB 1, putative"/>
    <property type="match status" value="1"/>
</dbReference>
<dbReference type="FunFam" id="1.10.1780.10:FF:000006">
    <property type="entry name" value="Chaperone protein ClpB3, chloroplastic"/>
    <property type="match status" value="1"/>
</dbReference>
<dbReference type="Gene3D" id="1.10.8.60">
    <property type="match status" value="1"/>
</dbReference>
<dbReference type="Gene3D" id="1.10.1780.10">
    <property type="entry name" value="Clp, N-terminal domain"/>
    <property type="match status" value="1"/>
</dbReference>
<dbReference type="Gene3D" id="3.40.50.300">
    <property type="entry name" value="P-loop containing nucleotide triphosphate hydrolases"/>
    <property type="match status" value="3"/>
</dbReference>
<dbReference type="InterPro" id="IPR003593">
    <property type="entry name" value="AAA+_ATPase"/>
</dbReference>
<dbReference type="InterPro" id="IPR003959">
    <property type="entry name" value="ATPase_AAA_core"/>
</dbReference>
<dbReference type="InterPro" id="IPR017730">
    <property type="entry name" value="Chaperonin_ClpB"/>
</dbReference>
<dbReference type="InterPro" id="IPR019489">
    <property type="entry name" value="Clp_ATPase_C"/>
</dbReference>
<dbReference type="InterPro" id="IPR036628">
    <property type="entry name" value="Clp_N_dom_sf"/>
</dbReference>
<dbReference type="InterPro" id="IPR004176">
    <property type="entry name" value="Clp_R_dom"/>
</dbReference>
<dbReference type="InterPro" id="IPR001270">
    <property type="entry name" value="ClpA/B"/>
</dbReference>
<dbReference type="InterPro" id="IPR018368">
    <property type="entry name" value="ClpA/B_CS1"/>
</dbReference>
<dbReference type="InterPro" id="IPR028299">
    <property type="entry name" value="ClpA/B_CS2"/>
</dbReference>
<dbReference type="InterPro" id="IPR041546">
    <property type="entry name" value="ClpA/ClpB_AAA_lid"/>
</dbReference>
<dbReference type="InterPro" id="IPR050130">
    <property type="entry name" value="ClpA_ClpB"/>
</dbReference>
<dbReference type="InterPro" id="IPR027417">
    <property type="entry name" value="P-loop_NTPase"/>
</dbReference>
<dbReference type="NCBIfam" id="TIGR03346">
    <property type="entry name" value="chaperone_ClpB"/>
    <property type="match status" value="1"/>
</dbReference>
<dbReference type="PANTHER" id="PTHR11638">
    <property type="entry name" value="ATP-DEPENDENT CLP PROTEASE"/>
    <property type="match status" value="1"/>
</dbReference>
<dbReference type="PANTHER" id="PTHR11638:SF18">
    <property type="entry name" value="HEAT SHOCK PROTEIN 104"/>
    <property type="match status" value="1"/>
</dbReference>
<dbReference type="Pfam" id="PF00004">
    <property type="entry name" value="AAA"/>
    <property type="match status" value="1"/>
</dbReference>
<dbReference type="Pfam" id="PF07724">
    <property type="entry name" value="AAA_2"/>
    <property type="match status" value="1"/>
</dbReference>
<dbReference type="Pfam" id="PF17871">
    <property type="entry name" value="AAA_lid_9"/>
    <property type="match status" value="1"/>
</dbReference>
<dbReference type="Pfam" id="PF02861">
    <property type="entry name" value="Clp_N"/>
    <property type="match status" value="2"/>
</dbReference>
<dbReference type="Pfam" id="PF10431">
    <property type="entry name" value="ClpB_D2-small"/>
    <property type="match status" value="1"/>
</dbReference>
<dbReference type="PRINTS" id="PR00300">
    <property type="entry name" value="CLPPROTEASEA"/>
</dbReference>
<dbReference type="SMART" id="SM00382">
    <property type="entry name" value="AAA"/>
    <property type="match status" value="2"/>
</dbReference>
<dbReference type="SMART" id="SM01086">
    <property type="entry name" value="ClpB_D2-small"/>
    <property type="match status" value="1"/>
</dbReference>
<dbReference type="SUPFAM" id="SSF81923">
    <property type="entry name" value="Double Clp-N motif"/>
    <property type="match status" value="1"/>
</dbReference>
<dbReference type="SUPFAM" id="SSF52540">
    <property type="entry name" value="P-loop containing nucleoside triphosphate hydrolases"/>
    <property type="match status" value="2"/>
</dbReference>
<dbReference type="PROSITE" id="PS51903">
    <property type="entry name" value="CLP_R"/>
    <property type="match status" value="1"/>
</dbReference>
<dbReference type="PROSITE" id="PS00870">
    <property type="entry name" value="CLPAB_1"/>
    <property type="match status" value="1"/>
</dbReference>
<dbReference type="PROSITE" id="PS00871">
    <property type="entry name" value="CLPAB_2"/>
    <property type="match status" value="1"/>
</dbReference>
<comment type="function">
    <text evidence="4 5">Molecular chaperone essential for chloroplast development and seedling viability. Mediates internal thylakoid membrane formation and confers thermotolerance to chloroplasts during heat stress.</text>
</comment>
<comment type="subcellular location">
    <subcellularLocation>
        <location evidence="4 5">Plastid</location>
        <location evidence="4 5">Chloroplast</location>
    </subcellularLocation>
</comment>
<comment type="induction">
    <text evidence="4 5">By heat stress.</text>
</comment>
<comment type="disruption phenotype">
    <text evidence="4 5">Seedling lethal when grown on soil. On agar plates supplied with sucrose, seedlings grow slowly with a chlorotic phenotype. They display irregular and small chloroplasts without starch grains in the stroma and with disorganized grana stacks and undeveloped thylakoid membranes.</text>
</comment>
<comment type="miscellaneous">
    <text>Plants overexpressing CLPB3 show inhibition of chloroplast development and a mild pale-green phenotype.</text>
</comment>
<comment type="similarity">
    <text evidence="6">Belongs to the ClpA/ClpB family.</text>
</comment>
<comment type="sequence caution" evidence="6">
    <conflict type="erroneous initiation">
        <sequence resource="EMBL-CDS" id="AAN17424"/>
    </conflict>
    <text>Truncated N-terminus.</text>
</comment>
<protein>
    <recommendedName>
        <fullName>Chaperone protein ClpB3, chloroplastic</fullName>
    </recommendedName>
    <alternativeName>
        <fullName>ATP-dependent Clp protease ATP-binding subunit ClpB homolog 3</fullName>
    </alternativeName>
    <alternativeName>
        <fullName>Casein lytic proteinase B3</fullName>
    </alternativeName>
    <alternativeName>
        <fullName>Protein ALBINO OR PALE GREEN 6</fullName>
    </alternativeName>
</protein>
<feature type="transit peptide" description="Chloroplast" evidence="2">
    <location>
        <begin position="1"/>
        <end position="67"/>
    </location>
</feature>
<feature type="chain" id="PRO_0000412573" description="Chaperone protein ClpB3, chloroplastic">
    <location>
        <begin position="68"/>
        <end position="968"/>
    </location>
</feature>
<feature type="domain" description="Clp R" evidence="3">
    <location>
        <begin position="78"/>
        <end position="222"/>
    </location>
</feature>
<feature type="region of interest" description="Repeat 1" evidence="3">
    <location>
        <begin position="82"/>
        <end position="147"/>
    </location>
</feature>
<feature type="region of interest" description="Repeat 2" evidence="3">
    <location>
        <begin position="159"/>
        <end position="222"/>
    </location>
</feature>
<feature type="region of interest" description="I" evidence="1">
    <location>
        <begin position="237"/>
        <end position="485"/>
    </location>
</feature>
<feature type="region of interest" description="II" evidence="1">
    <location>
        <begin position="611"/>
        <end position="802"/>
    </location>
</feature>
<feature type="coiled-coil region" evidence="2">
    <location>
        <begin position="488"/>
        <end position="606"/>
    </location>
</feature>
<feature type="binding site" evidence="2">
    <location>
        <begin position="282"/>
        <end position="289"/>
    </location>
    <ligand>
        <name>ATP</name>
        <dbReference type="ChEBI" id="CHEBI:30616"/>
    </ligand>
</feature>
<feature type="binding site" evidence="2">
    <location>
        <begin position="685"/>
        <end position="692"/>
    </location>
    <ligand>
        <name>ATP</name>
        <dbReference type="ChEBI" id="CHEBI:30616"/>
    </ligand>
</feature>
<name>CLPB3_ARATH</name>
<evidence type="ECO:0000250" key="1"/>
<evidence type="ECO:0000255" key="2"/>
<evidence type="ECO:0000255" key="3">
    <source>
        <dbReference type="PROSITE-ProRule" id="PRU01251"/>
    </source>
</evidence>
<evidence type="ECO:0000269" key="4">
    <source>
    </source>
</evidence>
<evidence type="ECO:0000269" key="5">
    <source>
    </source>
</evidence>
<evidence type="ECO:0000305" key="6"/>
<keyword id="KW-0067">ATP-binding</keyword>
<keyword id="KW-0143">Chaperone</keyword>
<keyword id="KW-0150">Chloroplast</keyword>
<keyword id="KW-0175">Coiled coil</keyword>
<keyword id="KW-0547">Nucleotide-binding</keyword>
<keyword id="KW-0934">Plastid</keyword>
<keyword id="KW-1185">Reference proteome</keyword>
<keyword id="KW-0677">Repeat</keyword>
<keyword id="KW-0346">Stress response</keyword>
<keyword id="KW-0809">Transit peptide</keyword>